<reference key="1">
    <citation type="journal article" date="2001" name="Proc. Natl. Acad. Sci. U.S.A.">
        <title>Complete genome sequence of Caulobacter crescentus.</title>
        <authorList>
            <person name="Nierman W.C."/>
            <person name="Feldblyum T.V."/>
            <person name="Laub M.T."/>
            <person name="Paulsen I.T."/>
            <person name="Nelson K.E."/>
            <person name="Eisen J.A."/>
            <person name="Heidelberg J.F."/>
            <person name="Alley M.R.K."/>
            <person name="Ohta N."/>
            <person name="Maddock J.R."/>
            <person name="Potocka I."/>
            <person name="Nelson W.C."/>
            <person name="Newton A."/>
            <person name="Stephens C."/>
            <person name="Phadke N.D."/>
            <person name="Ely B."/>
            <person name="DeBoy R.T."/>
            <person name="Dodson R.J."/>
            <person name="Durkin A.S."/>
            <person name="Gwinn M.L."/>
            <person name="Haft D.H."/>
            <person name="Kolonay J.F."/>
            <person name="Smit J."/>
            <person name="Craven M.B."/>
            <person name="Khouri H.M."/>
            <person name="Shetty J."/>
            <person name="Berry K.J."/>
            <person name="Utterback T.R."/>
            <person name="Tran K."/>
            <person name="Wolf A.M."/>
            <person name="Vamathevan J.J."/>
            <person name="Ermolaeva M.D."/>
            <person name="White O."/>
            <person name="Salzberg S.L."/>
            <person name="Venter J.C."/>
            <person name="Shapiro L."/>
            <person name="Fraser C.M."/>
        </authorList>
    </citation>
    <scope>NUCLEOTIDE SEQUENCE [LARGE SCALE GENOMIC DNA]</scope>
    <source>
        <strain>ATCC 19089 / CIP 103742 / CB 15</strain>
    </source>
</reference>
<reference key="2">
    <citation type="journal article" date="1997" name="J. Bacteriol.">
        <title>Catalase-peroxidase of Caulobacter crescentus: function and role in stationary-phase survival.</title>
        <authorList>
            <person name="Steinman H.M."/>
            <person name="Fareed F."/>
            <person name="Weinstein L."/>
        </authorList>
    </citation>
    <scope>NUCLEOTIDE SEQUENCE [GENOMIC DNA] OF 1-484</scope>
    <scope>FUNCTION</scope>
    <source>
        <strain>ATCC 19089 / CIP 103742 / CB 15</strain>
    </source>
</reference>
<organism>
    <name type="scientific">Caulobacter vibrioides (strain ATCC 19089 / CIP 103742 / CB 15)</name>
    <name type="common">Caulobacter crescentus</name>
    <dbReference type="NCBI Taxonomy" id="190650"/>
    <lineage>
        <taxon>Bacteria</taxon>
        <taxon>Pseudomonadati</taxon>
        <taxon>Pseudomonadota</taxon>
        <taxon>Alphaproteobacteria</taxon>
        <taxon>Caulobacterales</taxon>
        <taxon>Caulobacteraceae</taxon>
        <taxon>Caulobacter</taxon>
    </lineage>
</organism>
<gene>
    <name evidence="1" type="primary">katG</name>
    <name type="ordered locus">CC_3043</name>
</gene>
<name>KATG_CAUVC</name>
<keyword id="KW-0349">Heme</keyword>
<keyword id="KW-0376">Hydrogen peroxide</keyword>
<keyword id="KW-0408">Iron</keyword>
<keyword id="KW-0479">Metal-binding</keyword>
<keyword id="KW-0560">Oxidoreductase</keyword>
<keyword id="KW-0575">Peroxidase</keyword>
<keyword id="KW-1185">Reference proteome</keyword>
<protein>
    <recommendedName>
        <fullName evidence="1">Catalase-peroxidase</fullName>
        <shortName evidence="1">CP</shortName>
        <ecNumber evidence="1">1.11.1.21</ecNumber>
    </recommendedName>
    <alternativeName>
        <fullName evidence="1">Peroxidase/catalase</fullName>
    </alternativeName>
</protein>
<comment type="function">
    <text evidence="1 3">Bifunctional enzyme with both catalase and broad-spectrum peroxidase activity (By similarity). Important for stationary phase survival.</text>
</comment>
<comment type="catalytic activity">
    <reaction evidence="1">
        <text>H2O2 + AH2 = A + 2 H2O</text>
        <dbReference type="Rhea" id="RHEA:30275"/>
        <dbReference type="ChEBI" id="CHEBI:13193"/>
        <dbReference type="ChEBI" id="CHEBI:15377"/>
        <dbReference type="ChEBI" id="CHEBI:16240"/>
        <dbReference type="ChEBI" id="CHEBI:17499"/>
        <dbReference type="EC" id="1.11.1.21"/>
    </reaction>
</comment>
<comment type="catalytic activity">
    <reaction evidence="1">
        <text>2 H2O2 = O2 + 2 H2O</text>
        <dbReference type="Rhea" id="RHEA:20309"/>
        <dbReference type="ChEBI" id="CHEBI:15377"/>
        <dbReference type="ChEBI" id="CHEBI:15379"/>
        <dbReference type="ChEBI" id="CHEBI:16240"/>
        <dbReference type="EC" id="1.11.1.21"/>
    </reaction>
</comment>
<comment type="cofactor">
    <cofactor evidence="1">
        <name>heme b</name>
        <dbReference type="ChEBI" id="CHEBI:60344"/>
    </cofactor>
    <text evidence="1">Binds 1 heme b (iron(II)-protoporphyrin IX) group per dimer.</text>
</comment>
<comment type="subunit">
    <text evidence="1">Homodimer or homotetramer.</text>
</comment>
<comment type="PTM">
    <text evidence="1">Formation of the three residue Trp-Tyr-Met cross-link is important for the catalase, but not the peroxidase activity of the enzyme.</text>
</comment>
<comment type="similarity">
    <text evidence="1">Belongs to the peroxidase family. Peroxidase/catalase subfamily.</text>
</comment>
<comment type="sequence caution" evidence="4">
    <conflict type="erroneous initiation">
        <sequence resource="EMBL-CDS" id="AAC45850"/>
    </conflict>
</comment>
<comment type="sequence caution" evidence="4">
    <conflict type="erroneous initiation">
        <sequence resource="EMBL-CDS" id="AAK25005"/>
    </conflict>
</comment>
<feature type="chain" id="PRO_0000055568" description="Catalase-peroxidase">
    <location>
        <begin position="1"/>
        <end position="727"/>
    </location>
</feature>
<feature type="region of interest" description="Disordered" evidence="2">
    <location>
        <begin position="1"/>
        <end position="21"/>
    </location>
</feature>
<feature type="active site" description="Proton acceptor" evidence="1">
    <location>
        <position position="96"/>
    </location>
</feature>
<feature type="binding site" description="axial binding residue" evidence="1">
    <location>
        <position position="258"/>
    </location>
    <ligand>
        <name>heme b</name>
        <dbReference type="ChEBI" id="CHEBI:60344"/>
    </ligand>
    <ligandPart>
        <name>Fe</name>
        <dbReference type="ChEBI" id="CHEBI:18248"/>
    </ligandPart>
</feature>
<feature type="site" description="Transition state stabilizer" evidence="1">
    <location>
        <position position="92"/>
    </location>
</feature>
<feature type="cross-link" description="Tryptophyl-tyrosyl-methioninium (Trp-Tyr) (with M-243)" evidence="1">
    <location>
        <begin position="95"/>
        <end position="217"/>
    </location>
</feature>
<feature type="cross-link" description="Tryptophyl-tyrosyl-methioninium (Tyr-Met) (with W-95)" evidence="1">
    <location>
        <begin position="217"/>
        <end position="243"/>
    </location>
</feature>
<sequence length="727" mass="79012">MDAKVEDNIAGKCPMGHGRGPANRDWWPQSLRLEGLNQHAPRSNPMGEAFDYAEAFKSLDLDAVVSDLHALMTDSQEWWPADFGHYGGLFIRLAWHAAGTYRITDGRGGAGGGQQRFAPLNSWPDNTNLDKARRLLWPIKQKYGAKLSWADLYVLVGNVALESMGFKTFGFAGGRADQWEPEELYWGPESTWLDDKRYSGERELDSPLGAVQMGLIYVNPEGPNGNPDPLASARDIRETFARMAMNDEETVALIAGGHTFGKAHGAGDASLVGVEPEGGAIEAQGFGWASKHGTGKGPDAITGGPEVIWTQTPTRWSNHFFDNLFKYEWELTQSPAGAKQWQAKNAPADIPDAFDPNKTHVPRMLTSDLALRFDPAYEKISRRFYENPDQFADAFARAWFKLTHRDMGPIGRYLGPLVPKEELIWQDPIPAVDHPLADDKDIAALKAKILATGLSASDLVSTAWASASTYRQSDKRGGANGARIRLAPQKDWAVNNPPVLAKVLAALEGVQKDFNASAGGGKKISLADLIVLGGAAAIEKAAKDAGTSVTVPFAPGRMDASAEQTDAHSFEALEPRSDGFRNYRGPGKHYMAPEEALVDRAQLLGLSGPELTVLVGGLRVLGANADGSKDGVFTNRPGALSNDFFVNLLSMETTWSPTAANAFAGHDRKSSEPRWTATRVDLIFGSHAELRAFAEVYACADSQEKFVCDFVTAWNKVMNADRLDLAA</sequence>
<evidence type="ECO:0000255" key="1">
    <source>
        <dbReference type="HAMAP-Rule" id="MF_01961"/>
    </source>
</evidence>
<evidence type="ECO:0000256" key="2">
    <source>
        <dbReference type="SAM" id="MobiDB-lite"/>
    </source>
</evidence>
<evidence type="ECO:0000269" key="3">
    <source>
    </source>
</evidence>
<evidence type="ECO:0000305" key="4"/>
<proteinExistence type="inferred from homology"/>
<dbReference type="EC" id="1.11.1.21" evidence="1"/>
<dbReference type="EMBL" id="AE005673">
    <property type="protein sequence ID" value="AAK25005.1"/>
    <property type="status" value="ALT_INIT"/>
    <property type="molecule type" value="Genomic_DNA"/>
</dbReference>
<dbReference type="EMBL" id="AF027168">
    <property type="protein sequence ID" value="AAC45850.1"/>
    <property type="status" value="ALT_INIT"/>
    <property type="molecule type" value="Genomic_DNA"/>
</dbReference>
<dbReference type="PIR" id="A87626">
    <property type="entry name" value="A87626"/>
</dbReference>
<dbReference type="PIR" id="T45480">
    <property type="entry name" value="T45480"/>
</dbReference>
<dbReference type="RefSeq" id="NP_421837.1">
    <property type="nucleotide sequence ID" value="NC_002696.2"/>
</dbReference>
<dbReference type="SMR" id="O31066"/>
<dbReference type="STRING" id="190650.CC_3043"/>
<dbReference type="PeroxiBase" id="2349">
    <property type="entry name" value="CcrCP01"/>
</dbReference>
<dbReference type="EnsemblBacteria" id="AAK25005">
    <property type="protein sequence ID" value="AAK25005"/>
    <property type="gene ID" value="CC_3043"/>
</dbReference>
<dbReference type="KEGG" id="ccr:CC_3043"/>
<dbReference type="PATRIC" id="fig|190650.5.peg.3047"/>
<dbReference type="eggNOG" id="COG0376">
    <property type="taxonomic scope" value="Bacteria"/>
</dbReference>
<dbReference type="HOGENOM" id="CLU_025424_2_0_5"/>
<dbReference type="BRENDA" id="1.11.1.21">
    <property type="organism ID" value="1218"/>
</dbReference>
<dbReference type="Proteomes" id="UP000001816">
    <property type="component" value="Chromosome"/>
</dbReference>
<dbReference type="GO" id="GO:0005829">
    <property type="term" value="C:cytosol"/>
    <property type="evidence" value="ECO:0007669"/>
    <property type="project" value="TreeGrafter"/>
</dbReference>
<dbReference type="GO" id="GO:0004096">
    <property type="term" value="F:catalase activity"/>
    <property type="evidence" value="ECO:0007669"/>
    <property type="project" value="UniProtKB-UniRule"/>
</dbReference>
<dbReference type="GO" id="GO:0020037">
    <property type="term" value="F:heme binding"/>
    <property type="evidence" value="ECO:0007669"/>
    <property type="project" value="InterPro"/>
</dbReference>
<dbReference type="GO" id="GO:0046872">
    <property type="term" value="F:metal ion binding"/>
    <property type="evidence" value="ECO:0007669"/>
    <property type="project" value="UniProtKB-KW"/>
</dbReference>
<dbReference type="GO" id="GO:0070301">
    <property type="term" value="P:cellular response to hydrogen peroxide"/>
    <property type="evidence" value="ECO:0007669"/>
    <property type="project" value="TreeGrafter"/>
</dbReference>
<dbReference type="GO" id="GO:0042744">
    <property type="term" value="P:hydrogen peroxide catabolic process"/>
    <property type="evidence" value="ECO:0007669"/>
    <property type="project" value="UniProtKB-KW"/>
</dbReference>
<dbReference type="CDD" id="cd00649">
    <property type="entry name" value="catalase_peroxidase_1"/>
    <property type="match status" value="1"/>
</dbReference>
<dbReference type="CDD" id="cd08200">
    <property type="entry name" value="catalase_peroxidase_2"/>
    <property type="match status" value="1"/>
</dbReference>
<dbReference type="FunFam" id="1.10.420.10:FF:000002">
    <property type="entry name" value="Catalase-peroxidase"/>
    <property type="match status" value="1"/>
</dbReference>
<dbReference type="FunFam" id="1.10.420.10:FF:000004">
    <property type="entry name" value="Catalase-peroxidase"/>
    <property type="match status" value="1"/>
</dbReference>
<dbReference type="FunFam" id="1.10.520.10:FF:000002">
    <property type="entry name" value="Catalase-peroxidase"/>
    <property type="match status" value="1"/>
</dbReference>
<dbReference type="Gene3D" id="1.10.520.10">
    <property type="match status" value="2"/>
</dbReference>
<dbReference type="Gene3D" id="1.10.420.10">
    <property type="entry name" value="Peroxidase, domain 2"/>
    <property type="match status" value="2"/>
</dbReference>
<dbReference type="HAMAP" id="MF_01961">
    <property type="entry name" value="Catal_peroxid"/>
    <property type="match status" value="1"/>
</dbReference>
<dbReference type="InterPro" id="IPR000763">
    <property type="entry name" value="Catalase_peroxidase"/>
</dbReference>
<dbReference type="InterPro" id="IPR002016">
    <property type="entry name" value="Haem_peroxidase"/>
</dbReference>
<dbReference type="InterPro" id="IPR010255">
    <property type="entry name" value="Haem_peroxidase_sf"/>
</dbReference>
<dbReference type="InterPro" id="IPR019794">
    <property type="entry name" value="Peroxidases_AS"/>
</dbReference>
<dbReference type="InterPro" id="IPR019793">
    <property type="entry name" value="Peroxidases_heam-ligand_BS"/>
</dbReference>
<dbReference type="NCBIfam" id="TIGR00198">
    <property type="entry name" value="cat_per_HPI"/>
    <property type="match status" value="1"/>
</dbReference>
<dbReference type="NCBIfam" id="NF011635">
    <property type="entry name" value="PRK15061.1"/>
    <property type="match status" value="1"/>
</dbReference>
<dbReference type="PANTHER" id="PTHR30555:SF0">
    <property type="entry name" value="CATALASE-PEROXIDASE"/>
    <property type="match status" value="1"/>
</dbReference>
<dbReference type="PANTHER" id="PTHR30555">
    <property type="entry name" value="HYDROPEROXIDASE I, BIFUNCTIONAL CATALASE-PEROXIDASE"/>
    <property type="match status" value="1"/>
</dbReference>
<dbReference type="Pfam" id="PF00141">
    <property type="entry name" value="peroxidase"/>
    <property type="match status" value="2"/>
</dbReference>
<dbReference type="PRINTS" id="PR00460">
    <property type="entry name" value="BPEROXIDASE"/>
</dbReference>
<dbReference type="PRINTS" id="PR00458">
    <property type="entry name" value="PEROXIDASE"/>
</dbReference>
<dbReference type="SUPFAM" id="SSF48113">
    <property type="entry name" value="Heme-dependent peroxidases"/>
    <property type="match status" value="2"/>
</dbReference>
<dbReference type="PROSITE" id="PS00435">
    <property type="entry name" value="PEROXIDASE_1"/>
    <property type="match status" value="1"/>
</dbReference>
<dbReference type="PROSITE" id="PS00436">
    <property type="entry name" value="PEROXIDASE_2"/>
    <property type="match status" value="1"/>
</dbReference>
<dbReference type="PROSITE" id="PS50873">
    <property type="entry name" value="PEROXIDASE_4"/>
    <property type="match status" value="1"/>
</dbReference>
<accession>O31066</accession>